<dbReference type="EMBL" id="BC086494">
    <property type="protein sequence ID" value="AAH86494.1"/>
    <property type="molecule type" value="mRNA"/>
</dbReference>
<dbReference type="RefSeq" id="NP_001011181.1">
    <property type="nucleotide sequence ID" value="NM_001011181.2"/>
</dbReference>
<dbReference type="SMR" id="Q5RJV0"/>
<dbReference type="FunCoup" id="Q5RJV0">
    <property type="interactions" value="1092"/>
</dbReference>
<dbReference type="STRING" id="8364.ENSXETP00000032922"/>
<dbReference type="DNASU" id="496601"/>
<dbReference type="GeneID" id="496601"/>
<dbReference type="KEGG" id="xtr:496601"/>
<dbReference type="AGR" id="Xenbase:XB-GENE-948680"/>
<dbReference type="CTD" id="57017"/>
<dbReference type="Xenbase" id="XB-GENE-948680">
    <property type="gene designation" value="coq9"/>
</dbReference>
<dbReference type="HOGENOM" id="CLU_057411_0_2_1"/>
<dbReference type="InParanoid" id="Q5RJV0"/>
<dbReference type="OMA" id="IELIIYW"/>
<dbReference type="OrthoDB" id="619536at2759"/>
<dbReference type="Reactome" id="R-XTR-2142789">
    <property type="pathway name" value="Ubiquinol biosynthesis"/>
</dbReference>
<dbReference type="UniPathway" id="UPA00232"/>
<dbReference type="Proteomes" id="UP000008143">
    <property type="component" value="Chromosome 4"/>
</dbReference>
<dbReference type="Bgee" id="ENSXETG00000025042">
    <property type="expression patterns" value="Expressed in skeletal muscle tissue and 14 other cell types or tissues"/>
</dbReference>
<dbReference type="GO" id="GO:0005739">
    <property type="term" value="C:mitochondrion"/>
    <property type="evidence" value="ECO:0007669"/>
    <property type="project" value="UniProtKB-SubCell"/>
</dbReference>
<dbReference type="GO" id="GO:0019840">
    <property type="term" value="F:isoprenoid binding"/>
    <property type="evidence" value="ECO:0000250"/>
    <property type="project" value="UniProtKB"/>
</dbReference>
<dbReference type="GO" id="GO:0008289">
    <property type="term" value="F:lipid binding"/>
    <property type="evidence" value="ECO:0000250"/>
    <property type="project" value="UniProtKB"/>
</dbReference>
<dbReference type="GO" id="GO:0042803">
    <property type="term" value="F:protein homodimerization activity"/>
    <property type="evidence" value="ECO:0000250"/>
    <property type="project" value="UniProtKB"/>
</dbReference>
<dbReference type="GO" id="GO:0006744">
    <property type="term" value="P:ubiquinone biosynthetic process"/>
    <property type="evidence" value="ECO:0000250"/>
    <property type="project" value="UniProtKB"/>
</dbReference>
<dbReference type="FunFam" id="1.10.357.10:FF:000004">
    <property type="entry name" value="Ubiquinone biosynthesis protein COQ9, mitochondrial"/>
    <property type="match status" value="1"/>
</dbReference>
<dbReference type="Gene3D" id="1.10.357.10">
    <property type="entry name" value="Tetracycline Repressor, domain 2"/>
    <property type="match status" value="1"/>
</dbReference>
<dbReference type="InterPro" id="IPR013718">
    <property type="entry name" value="COQ9_C"/>
</dbReference>
<dbReference type="InterPro" id="IPR048674">
    <property type="entry name" value="COQ9_HTH"/>
</dbReference>
<dbReference type="InterPro" id="IPR012762">
    <property type="entry name" value="Ubiq_biosynth_COQ9"/>
</dbReference>
<dbReference type="NCBIfam" id="TIGR02396">
    <property type="entry name" value="diverge_rpsU"/>
    <property type="match status" value="1"/>
</dbReference>
<dbReference type="PANTHER" id="PTHR21427">
    <property type="entry name" value="UBIQUINONE BIOSYNTHESIS PROTEIN COQ9, MITOCHONDRIAL"/>
    <property type="match status" value="1"/>
</dbReference>
<dbReference type="PANTHER" id="PTHR21427:SF19">
    <property type="entry name" value="UBIQUINONE BIOSYNTHESIS PROTEIN COQ9, MITOCHONDRIAL"/>
    <property type="match status" value="1"/>
</dbReference>
<dbReference type="Pfam" id="PF08511">
    <property type="entry name" value="COQ9"/>
    <property type="match status" value="1"/>
</dbReference>
<dbReference type="Pfam" id="PF21392">
    <property type="entry name" value="COQ9_N"/>
    <property type="match status" value="1"/>
</dbReference>
<proteinExistence type="evidence at transcript level"/>
<reference key="1">
    <citation type="submission" date="2004-11" db="EMBL/GenBank/DDBJ databases">
        <authorList>
            <consortium name="NIH - Xenopus Gene Collection (XGC) project"/>
        </authorList>
    </citation>
    <scope>NUCLEOTIDE SEQUENCE [LARGE SCALE MRNA]</scope>
    <source>
        <tissue>Embryo</tissue>
    </source>
</reference>
<gene>
    <name evidence="1" type="primary">coq9</name>
</gene>
<name>COQ9_XENTR</name>
<comment type="function">
    <text evidence="1">Membrane-associated protein that warps the membrane surface to access and bind aromatic isoprenes with high specificity, including ubiquinone (CoQ) isoprene intermediates and presents them directly to COQ7, therefore facilitating the COQ7-mediated hydroxylase step. Participates in the biosynthesis of coenzyme Q, also named ubiquinone, an essential lipid-soluble electron transporter for aerobic cellular respiration.</text>
</comment>
<comment type="pathway">
    <text evidence="2">Cofactor biosynthesis; ubiquinone biosynthesis.</text>
</comment>
<comment type="subunit">
    <text evidence="1">Homodimer. Heterodimer; two heterodimers of COQ7:COQ9 come together on the same side of the lipid pseudo-bilayer and form a curved tetramer with a hydrophobic surface suitable for membrane interaction. These two tetramers assemble into a soluble octamer with a pseudo-bilayer of lipids captured within. Interacts with COQ7; this interaction allows ubiquinone (CoQ) isoprene intermediates presentation to COQ7 and facilitates the COQ7-mediated hydroxylase step.</text>
</comment>
<comment type="subcellular location">
    <subcellularLocation>
        <location evidence="2">Mitochondrion</location>
    </subcellularLocation>
    <text evidence="1">Associates with cardiolipin-rich membranes which leads to the lipid bilayer deformation and then accessing to membrane-bound lipids.</text>
</comment>
<comment type="domain">
    <text evidence="1">Structurally similar to the bacterial FadR protein (fatty acid metabolism regulator protein).</text>
</comment>
<comment type="similarity">
    <text evidence="5">Belongs to the COQ9 family.</text>
</comment>
<accession>Q5RJV0</accession>
<protein>
    <recommendedName>
        <fullName evidence="1">Ubiquinone biosynthesis protein COQ9, mitochondrial</fullName>
    </recommendedName>
</protein>
<feature type="transit peptide" description="Mitochondrion" evidence="3">
    <location>
        <begin position="1"/>
        <end position="46"/>
    </location>
</feature>
<feature type="chain" id="PRO_0000228642" description="Ubiquinone biosynthesis protein COQ9, mitochondrial">
    <location>
        <begin position="47"/>
        <end position="317"/>
    </location>
</feature>
<feature type="region of interest" description="Disordered" evidence="4">
    <location>
        <begin position="45"/>
        <end position="97"/>
    </location>
</feature>
<feature type="compositionally biased region" description="Acidic residues" evidence="4">
    <location>
        <begin position="85"/>
        <end position="96"/>
    </location>
</feature>
<feature type="binding site" evidence="1">
    <location>
        <position position="243"/>
    </location>
    <ligand>
        <name>a 1,2-diacylglycero-3-phosphoethanolamine</name>
        <dbReference type="ChEBI" id="CHEBI:57613"/>
    </ligand>
</feature>
<keyword id="KW-0446">Lipid-binding</keyword>
<keyword id="KW-0496">Mitochondrion</keyword>
<keyword id="KW-1185">Reference proteome</keyword>
<keyword id="KW-0809">Transit peptide</keyword>
<keyword id="KW-0831">Ubiquinone biosynthesis</keyword>
<sequence length="317" mass="35305">MAASVARVLKAAGGRQLLLMVARRRPVLRQPFLLMPRKFWGTSALRSEDQKQPPFSSTSAHAGTPEHAEEQYQQQQPPPRYTDQAGEESEGYESEEQLQQRILSAALQFVPDFGWSADAIAEGAKSLDMSAAAAGMFEDGGSELVLHFVTQCNSQLTELLEEEQKLVQLGTSEKKPTTQFLRDAVEARLRMHIPYIEQWPQALGMLLLPRNIPSSLKLLTAMVDDIWHYAGDQSTDVSWYTRRAVLTGIYNTTELVMLQDSSPDFEDTWKFLENRISEAMTMGTSVKQVASTGEAVIQGLMGAAVTLKNLTGLNQRR</sequence>
<evidence type="ECO:0000250" key="1">
    <source>
        <dbReference type="UniProtKB" id="O75208"/>
    </source>
</evidence>
<evidence type="ECO:0000250" key="2">
    <source>
        <dbReference type="UniProtKB" id="Q8K1Z0"/>
    </source>
</evidence>
<evidence type="ECO:0000255" key="3"/>
<evidence type="ECO:0000256" key="4">
    <source>
        <dbReference type="SAM" id="MobiDB-lite"/>
    </source>
</evidence>
<evidence type="ECO:0000305" key="5"/>
<organism>
    <name type="scientific">Xenopus tropicalis</name>
    <name type="common">Western clawed frog</name>
    <name type="synonym">Silurana tropicalis</name>
    <dbReference type="NCBI Taxonomy" id="8364"/>
    <lineage>
        <taxon>Eukaryota</taxon>
        <taxon>Metazoa</taxon>
        <taxon>Chordata</taxon>
        <taxon>Craniata</taxon>
        <taxon>Vertebrata</taxon>
        <taxon>Euteleostomi</taxon>
        <taxon>Amphibia</taxon>
        <taxon>Batrachia</taxon>
        <taxon>Anura</taxon>
        <taxon>Pipoidea</taxon>
        <taxon>Pipidae</taxon>
        <taxon>Xenopodinae</taxon>
        <taxon>Xenopus</taxon>
        <taxon>Silurana</taxon>
    </lineage>
</organism>